<gene>
    <name evidence="1" type="primary">tyrS</name>
    <name type="ordered locus">BUsg_113</name>
</gene>
<proteinExistence type="inferred from homology"/>
<keyword id="KW-0030">Aminoacyl-tRNA synthetase</keyword>
<keyword id="KW-0067">ATP-binding</keyword>
<keyword id="KW-0963">Cytoplasm</keyword>
<keyword id="KW-0436">Ligase</keyword>
<keyword id="KW-0547">Nucleotide-binding</keyword>
<keyword id="KW-0648">Protein biosynthesis</keyword>
<keyword id="KW-0694">RNA-binding</keyword>
<organism>
    <name type="scientific">Buchnera aphidicola subsp. Schizaphis graminum (strain Sg)</name>
    <dbReference type="NCBI Taxonomy" id="198804"/>
    <lineage>
        <taxon>Bacteria</taxon>
        <taxon>Pseudomonadati</taxon>
        <taxon>Pseudomonadota</taxon>
        <taxon>Gammaproteobacteria</taxon>
        <taxon>Enterobacterales</taxon>
        <taxon>Erwiniaceae</taxon>
        <taxon>Buchnera</taxon>
    </lineage>
</organism>
<reference key="1">
    <citation type="journal article" date="2002" name="Science">
        <title>50 million years of genomic stasis in endosymbiotic bacteria.</title>
        <authorList>
            <person name="Tamas I."/>
            <person name="Klasson L."/>
            <person name="Canbaeck B."/>
            <person name="Naeslund A.K."/>
            <person name="Eriksson A.-S."/>
            <person name="Wernegreen J.J."/>
            <person name="Sandstroem J.P."/>
            <person name="Moran N.A."/>
            <person name="Andersson S.G.E."/>
        </authorList>
    </citation>
    <scope>NUCLEOTIDE SEQUENCE [LARGE SCALE GENOMIC DNA]</scope>
    <source>
        <strain>Sg</strain>
    </source>
</reference>
<comment type="function">
    <text evidence="1">Catalyzes the attachment of tyrosine to tRNA(Tyr) in a two-step reaction: tyrosine is first activated by ATP to form Tyr-AMP and then transferred to the acceptor end of tRNA(Tyr).</text>
</comment>
<comment type="catalytic activity">
    <reaction evidence="1">
        <text>tRNA(Tyr) + L-tyrosine + ATP = L-tyrosyl-tRNA(Tyr) + AMP + diphosphate + H(+)</text>
        <dbReference type="Rhea" id="RHEA:10220"/>
        <dbReference type="Rhea" id="RHEA-COMP:9706"/>
        <dbReference type="Rhea" id="RHEA-COMP:9707"/>
        <dbReference type="ChEBI" id="CHEBI:15378"/>
        <dbReference type="ChEBI" id="CHEBI:30616"/>
        <dbReference type="ChEBI" id="CHEBI:33019"/>
        <dbReference type="ChEBI" id="CHEBI:58315"/>
        <dbReference type="ChEBI" id="CHEBI:78442"/>
        <dbReference type="ChEBI" id="CHEBI:78536"/>
        <dbReference type="ChEBI" id="CHEBI:456215"/>
        <dbReference type="EC" id="6.1.1.1"/>
    </reaction>
</comment>
<comment type="subunit">
    <text evidence="1">Homodimer.</text>
</comment>
<comment type="subcellular location">
    <subcellularLocation>
        <location evidence="1">Cytoplasm</location>
    </subcellularLocation>
</comment>
<comment type="similarity">
    <text evidence="1">Belongs to the class-I aminoacyl-tRNA synthetase family. TyrS type 1 subfamily.</text>
</comment>
<sequence length="422" mass="48985">MDLINELHQRNLIFHITNENKLKELIKNKYISLYCGFDPTEDSLHVGHLLPLITLKRFQVLGHKPIVLIGGATSLIGDPSFKTKERLLKSDSFVEKCTLKISQQISFFLDFNSNFNSAIILNNNLWFKKINILQFLRDVGKYFSVNALINREAVKKRIKRSDQGISFTEFSYNLLQAYDFFILNQKNQVSLQIGGSDQWGNISSGMHLIHRISKKEAYGLTLPLLMQSNGIKFGKTESGTVWLDPQKTTPYRFYQFWMNIEDSNVYRFLKLFTFIDIHEINEREKNSYKKNQIVSDKVLLAKHMTRLVHGDEKLSAAERITNILFFKNINDIQISDLEQLRKDGVPVVETYKIKDLQEALVLSSLAQSRTQAKNMIISNSISINTKKIVNKNYIIDDNDKLFNQFTLLSRGKKNHCLIYWNK</sequence>
<accession>Q8KA14</accession>
<name>SYY_BUCAP</name>
<protein>
    <recommendedName>
        <fullName evidence="1">Tyrosine--tRNA ligase</fullName>
        <ecNumber evidence="1">6.1.1.1</ecNumber>
    </recommendedName>
    <alternativeName>
        <fullName evidence="1">Tyrosyl-tRNA synthetase</fullName>
        <shortName evidence="1">TyrRS</shortName>
    </alternativeName>
</protein>
<dbReference type="EC" id="6.1.1.1" evidence="1"/>
<dbReference type="EMBL" id="AE013218">
    <property type="protein sequence ID" value="AAM67682.1"/>
    <property type="molecule type" value="Genomic_DNA"/>
</dbReference>
<dbReference type="RefSeq" id="WP_011053648.1">
    <property type="nucleotide sequence ID" value="NC_004061.1"/>
</dbReference>
<dbReference type="SMR" id="Q8KA14"/>
<dbReference type="STRING" id="198804.BUsg_113"/>
<dbReference type="GeneID" id="93003583"/>
<dbReference type="KEGG" id="bas:BUsg_113"/>
<dbReference type="eggNOG" id="COG0162">
    <property type="taxonomic scope" value="Bacteria"/>
</dbReference>
<dbReference type="HOGENOM" id="CLU_024003_0_3_6"/>
<dbReference type="Proteomes" id="UP000000416">
    <property type="component" value="Chromosome"/>
</dbReference>
<dbReference type="GO" id="GO:0005829">
    <property type="term" value="C:cytosol"/>
    <property type="evidence" value="ECO:0007669"/>
    <property type="project" value="TreeGrafter"/>
</dbReference>
<dbReference type="GO" id="GO:0005524">
    <property type="term" value="F:ATP binding"/>
    <property type="evidence" value="ECO:0007669"/>
    <property type="project" value="UniProtKB-UniRule"/>
</dbReference>
<dbReference type="GO" id="GO:0003723">
    <property type="term" value="F:RNA binding"/>
    <property type="evidence" value="ECO:0007669"/>
    <property type="project" value="UniProtKB-KW"/>
</dbReference>
<dbReference type="GO" id="GO:0004831">
    <property type="term" value="F:tyrosine-tRNA ligase activity"/>
    <property type="evidence" value="ECO:0007669"/>
    <property type="project" value="UniProtKB-UniRule"/>
</dbReference>
<dbReference type="GO" id="GO:0006437">
    <property type="term" value="P:tyrosyl-tRNA aminoacylation"/>
    <property type="evidence" value="ECO:0007669"/>
    <property type="project" value="UniProtKB-UniRule"/>
</dbReference>
<dbReference type="CDD" id="cd00165">
    <property type="entry name" value="S4"/>
    <property type="match status" value="1"/>
</dbReference>
<dbReference type="CDD" id="cd00805">
    <property type="entry name" value="TyrRS_core"/>
    <property type="match status" value="1"/>
</dbReference>
<dbReference type="FunFam" id="1.10.240.10:FF:000001">
    <property type="entry name" value="Tyrosine--tRNA ligase"/>
    <property type="match status" value="1"/>
</dbReference>
<dbReference type="FunFam" id="3.40.50.620:FF:000008">
    <property type="entry name" value="Tyrosine--tRNA ligase"/>
    <property type="match status" value="1"/>
</dbReference>
<dbReference type="Gene3D" id="3.40.50.620">
    <property type="entry name" value="HUPs"/>
    <property type="match status" value="1"/>
</dbReference>
<dbReference type="Gene3D" id="3.10.290.10">
    <property type="entry name" value="RNA-binding S4 domain"/>
    <property type="match status" value="1"/>
</dbReference>
<dbReference type="Gene3D" id="1.10.240.10">
    <property type="entry name" value="Tyrosyl-Transfer RNA Synthetase"/>
    <property type="match status" value="1"/>
</dbReference>
<dbReference type="HAMAP" id="MF_02006">
    <property type="entry name" value="Tyr_tRNA_synth_type1"/>
    <property type="match status" value="1"/>
</dbReference>
<dbReference type="InterPro" id="IPR002305">
    <property type="entry name" value="aa-tRNA-synth_Ic"/>
</dbReference>
<dbReference type="InterPro" id="IPR014729">
    <property type="entry name" value="Rossmann-like_a/b/a_fold"/>
</dbReference>
<dbReference type="InterPro" id="IPR002942">
    <property type="entry name" value="S4_RNA-bd"/>
</dbReference>
<dbReference type="InterPro" id="IPR036986">
    <property type="entry name" value="S4_RNA-bd_sf"/>
</dbReference>
<dbReference type="InterPro" id="IPR054608">
    <property type="entry name" value="SYY-like_C"/>
</dbReference>
<dbReference type="InterPro" id="IPR002307">
    <property type="entry name" value="Tyr-tRNA-ligase"/>
</dbReference>
<dbReference type="InterPro" id="IPR024088">
    <property type="entry name" value="Tyr-tRNA-ligase_bac-type"/>
</dbReference>
<dbReference type="InterPro" id="IPR024107">
    <property type="entry name" value="Tyr-tRNA-ligase_bac_1"/>
</dbReference>
<dbReference type="NCBIfam" id="TIGR00234">
    <property type="entry name" value="tyrS"/>
    <property type="match status" value="1"/>
</dbReference>
<dbReference type="PANTHER" id="PTHR11766:SF0">
    <property type="entry name" value="TYROSINE--TRNA LIGASE, MITOCHONDRIAL"/>
    <property type="match status" value="1"/>
</dbReference>
<dbReference type="PANTHER" id="PTHR11766">
    <property type="entry name" value="TYROSYL-TRNA SYNTHETASE"/>
    <property type="match status" value="1"/>
</dbReference>
<dbReference type="Pfam" id="PF22421">
    <property type="entry name" value="SYY_C-terminal"/>
    <property type="match status" value="1"/>
</dbReference>
<dbReference type="Pfam" id="PF00579">
    <property type="entry name" value="tRNA-synt_1b"/>
    <property type="match status" value="1"/>
</dbReference>
<dbReference type="PRINTS" id="PR01040">
    <property type="entry name" value="TRNASYNTHTYR"/>
</dbReference>
<dbReference type="SMART" id="SM00363">
    <property type="entry name" value="S4"/>
    <property type="match status" value="1"/>
</dbReference>
<dbReference type="SUPFAM" id="SSF55174">
    <property type="entry name" value="Alpha-L RNA-binding motif"/>
    <property type="match status" value="1"/>
</dbReference>
<dbReference type="SUPFAM" id="SSF52374">
    <property type="entry name" value="Nucleotidylyl transferase"/>
    <property type="match status" value="1"/>
</dbReference>
<dbReference type="PROSITE" id="PS50889">
    <property type="entry name" value="S4"/>
    <property type="match status" value="1"/>
</dbReference>
<evidence type="ECO:0000255" key="1">
    <source>
        <dbReference type="HAMAP-Rule" id="MF_02006"/>
    </source>
</evidence>
<feature type="chain" id="PRO_0000055647" description="Tyrosine--tRNA ligase">
    <location>
        <begin position="1"/>
        <end position="422"/>
    </location>
</feature>
<feature type="domain" description="S4 RNA-binding" evidence="1">
    <location>
        <begin position="354"/>
        <end position="412"/>
    </location>
</feature>
<feature type="short sequence motif" description="'HIGH' region">
    <location>
        <begin position="39"/>
        <end position="48"/>
    </location>
</feature>
<feature type="short sequence motif" description="'KMSKS' region">
    <location>
        <begin position="232"/>
        <end position="236"/>
    </location>
</feature>
<feature type="binding site" evidence="1">
    <location>
        <position position="34"/>
    </location>
    <ligand>
        <name>L-tyrosine</name>
        <dbReference type="ChEBI" id="CHEBI:58315"/>
    </ligand>
</feature>
<feature type="binding site" evidence="1">
    <location>
        <position position="172"/>
    </location>
    <ligand>
        <name>L-tyrosine</name>
        <dbReference type="ChEBI" id="CHEBI:58315"/>
    </ligand>
</feature>
<feature type="binding site" evidence="1">
    <location>
        <position position="176"/>
    </location>
    <ligand>
        <name>L-tyrosine</name>
        <dbReference type="ChEBI" id="CHEBI:58315"/>
    </ligand>
</feature>
<feature type="binding site" evidence="1">
    <location>
        <position position="235"/>
    </location>
    <ligand>
        <name>ATP</name>
        <dbReference type="ChEBI" id="CHEBI:30616"/>
    </ligand>
</feature>